<reference key="1">
    <citation type="journal article" date="1999" name="Nature">
        <title>Sequence and analysis of chromosome 2 of the plant Arabidopsis thaliana.</title>
        <authorList>
            <person name="Lin X."/>
            <person name="Kaul S."/>
            <person name="Rounsley S.D."/>
            <person name="Shea T.P."/>
            <person name="Benito M.-I."/>
            <person name="Town C.D."/>
            <person name="Fujii C.Y."/>
            <person name="Mason T.M."/>
            <person name="Bowman C.L."/>
            <person name="Barnstead M.E."/>
            <person name="Feldblyum T.V."/>
            <person name="Buell C.R."/>
            <person name="Ketchum K.A."/>
            <person name="Lee J.J."/>
            <person name="Ronning C.M."/>
            <person name="Koo H.L."/>
            <person name="Moffat K.S."/>
            <person name="Cronin L.A."/>
            <person name="Shen M."/>
            <person name="Pai G."/>
            <person name="Van Aken S."/>
            <person name="Umayam L."/>
            <person name="Tallon L.J."/>
            <person name="Gill J.E."/>
            <person name="Adams M.D."/>
            <person name="Carrera A.J."/>
            <person name="Creasy T.H."/>
            <person name="Goodman H.M."/>
            <person name="Somerville C.R."/>
            <person name="Copenhaver G.P."/>
            <person name="Preuss D."/>
            <person name="Nierman W.C."/>
            <person name="White O."/>
            <person name="Eisen J.A."/>
            <person name="Salzberg S.L."/>
            <person name="Fraser C.M."/>
            <person name="Venter J.C."/>
        </authorList>
    </citation>
    <scope>NUCLEOTIDE SEQUENCE [LARGE SCALE GENOMIC DNA]</scope>
    <source>
        <strain>cv. Columbia</strain>
    </source>
</reference>
<reference key="2">
    <citation type="journal article" date="2017" name="Plant J.">
        <title>Araport11: a complete reannotation of the Arabidopsis thaliana reference genome.</title>
        <authorList>
            <person name="Cheng C.Y."/>
            <person name="Krishnakumar V."/>
            <person name="Chan A.P."/>
            <person name="Thibaud-Nissen F."/>
            <person name="Schobel S."/>
            <person name="Town C.D."/>
        </authorList>
    </citation>
    <scope>GENOME REANNOTATION</scope>
    <source>
        <strain>cv. Columbia</strain>
    </source>
</reference>
<reference key="3">
    <citation type="journal article" date="2003" name="Science">
        <title>Empirical analysis of transcriptional activity in the Arabidopsis genome.</title>
        <authorList>
            <person name="Yamada K."/>
            <person name="Lim J."/>
            <person name="Dale J.M."/>
            <person name="Chen H."/>
            <person name="Shinn P."/>
            <person name="Palm C.J."/>
            <person name="Southwick A.M."/>
            <person name="Wu H.C."/>
            <person name="Kim C.J."/>
            <person name="Nguyen M."/>
            <person name="Pham P.K."/>
            <person name="Cheuk R.F."/>
            <person name="Karlin-Newmann G."/>
            <person name="Liu S.X."/>
            <person name="Lam B."/>
            <person name="Sakano H."/>
            <person name="Wu T."/>
            <person name="Yu G."/>
            <person name="Miranda M."/>
            <person name="Quach H.L."/>
            <person name="Tripp M."/>
            <person name="Chang C.H."/>
            <person name="Lee J.M."/>
            <person name="Toriumi M.J."/>
            <person name="Chan M.M."/>
            <person name="Tang C.C."/>
            <person name="Onodera C.S."/>
            <person name="Deng J.M."/>
            <person name="Akiyama K."/>
            <person name="Ansari Y."/>
            <person name="Arakawa T."/>
            <person name="Banh J."/>
            <person name="Banno F."/>
            <person name="Bowser L."/>
            <person name="Brooks S.Y."/>
            <person name="Carninci P."/>
            <person name="Chao Q."/>
            <person name="Choy N."/>
            <person name="Enju A."/>
            <person name="Goldsmith A.D."/>
            <person name="Gurjal M."/>
            <person name="Hansen N.F."/>
            <person name="Hayashizaki Y."/>
            <person name="Johnson-Hopson C."/>
            <person name="Hsuan V.W."/>
            <person name="Iida K."/>
            <person name="Karnes M."/>
            <person name="Khan S."/>
            <person name="Koesema E."/>
            <person name="Ishida J."/>
            <person name="Jiang P.X."/>
            <person name="Jones T."/>
            <person name="Kawai J."/>
            <person name="Kamiya A."/>
            <person name="Meyers C."/>
            <person name="Nakajima M."/>
            <person name="Narusaka M."/>
            <person name="Seki M."/>
            <person name="Sakurai T."/>
            <person name="Satou M."/>
            <person name="Tamse R."/>
            <person name="Vaysberg M."/>
            <person name="Wallender E.K."/>
            <person name="Wong C."/>
            <person name="Yamamura Y."/>
            <person name="Yuan S."/>
            <person name="Shinozaki K."/>
            <person name="Davis R.W."/>
            <person name="Theologis A."/>
            <person name="Ecker J.R."/>
        </authorList>
    </citation>
    <scope>NUCLEOTIDE SEQUENCE [LARGE SCALE MRNA] (ISOFORM 1)</scope>
    <source>
        <strain>cv. Columbia</strain>
    </source>
</reference>
<reference key="4">
    <citation type="journal article" date="2005" name="J. Biol. Chem.">
        <title>Structural studies on a mitochondrial glyoxalase II.</title>
        <authorList>
            <person name="Marasinghe G.P."/>
            <person name="Sander I.M."/>
            <person name="Bennett B."/>
            <person name="Periyannan G."/>
            <person name="Yang K.W."/>
            <person name="Makaroff C.A."/>
            <person name="Crowder M.W."/>
        </authorList>
    </citation>
    <scope>X-RAY CRYSTALLOGRAPHY (1.74 ANGSTROMS) OF 72-324 IN COMPLEX WITH ZINC AND IRON</scope>
    <scope>CATALYTIC ACTIVITY</scope>
    <scope>FUNCTION</scope>
    <scope>SUBUNIT</scope>
    <scope>COFACTOR</scope>
</reference>
<reference key="5">
    <citation type="journal article" date="2007" name="Structure">
        <title>Ensemble refinement of protein crystal structures: validation and application.</title>
        <authorList>
            <person name="Levin E.J."/>
            <person name="Kondrashov D.A."/>
            <person name="Wesenberg G.E."/>
            <person name="Phillips G.N. Jr."/>
        </authorList>
    </citation>
    <scope>X-RAY CRYSTALLOGRAPHY (1.74 ANGSTROMS) OF 72-324 IN COMPLEX WITH ZINC AND IRON</scope>
</reference>
<evidence type="ECO:0000255" key="1"/>
<evidence type="ECO:0000269" key="2">
    <source>
    </source>
</evidence>
<evidence type="ECO:0000269" key="3">
    <source>
    </source>
</evidence>
<evidence type="ECO:0000305" key="4"/>
<evidence type="ECO:0007829" key="5">
    <source>
        <dbReference type="PDB" id="1XM8"/>
    </source>
</evidence>
<gene>
    <name type="ordered locus">At2g31350</name>
    <name type="ORF">T28P16.16</name>
</gene>
<feature type="transit peptide" description="Mitochondrion" evidence="1">
    <location>
        <begin position="1"/>
        <end position="64"/>
    </location>
</feature>
<feature type="chain" id="PRO_0000012287" description="Hydroxyacylglutathione hydrolase 2, mitochondrial">
    <location>
        <begin position="65"/>
        <end position="324"/>
    </location>
</feature>
<feature type="binding site" evidence="2 3">
    <location>
        <position position="124"/>
    </location>
    <ligand>
        <name>Zn(2+)</name>
        <dbReference type="ChEBI" id="CHEBI:29105"/>
    </ligand>
</feature>
<feature type="binding site" evidence="2 3">
    <location>
        <position position="126"/>
    </location>
    <ligand>
        <name>Zn(2+)</name>
        <dbReference type="ChEBI" id="CHEBI:29105"/>
    </ligand>
</feature>
<feature type="binding site" evidence="2 3">
    <location>
        <position position="128"/>
    </location>
    <ligand>
        <name>Fe cation</name>
        <dbReference type="ChEBI" id="CHEBI:24875"/>
    </ligand>
</feature>
<feature type="binding site" evidence="2 3">
    <location>
        <position position="129"/>
    </location>
    <ligand>
        <name>Fe cation</name>
        <dbReference type="ChEBI" id="CHEBI:24875"/>
    </ligand>
</feature>
<feature type="binding site" evidence="2 3">
    <location>
        <position position="182"/>
    </location>
    <ligand>
        <name>Zn(2+)</name>
        <dbReference type="ChEBI" id="CHEBI:29105"/>
    </ligand>
</feature>
<feature type="binding site" evidence="2 3">
    <location>
        <position position="201"/>
    </location>
    <ligand>
        <name>Fe cation</name>
        <dbReference type="ChEBI" id="CHEBI:24875"/>
    </ligand>
</feature>
<feature type="binding site" evidence="2 3">
    <location>
        <position position="201"/>
    </location>
    <ligand>
        <name>Zn(2+)</name>
        <dbReference type="ChEBI" id="CHEBI:29105"/>
    </ligand>
</feature>
<feature type="binding site" evidence="2 3">
    <location>
        <position position="239"/>
    </location>
    <ligand>
        <name>Fe cation</name>
        <dbReference type="ChEBI" id="CHEBI:24875"/>
    </ligand>
</feature>
<feature type="splice variant" id="VSP_018092" description="In isoform 2." evidence="4">
    <location>
        <position position="19"/>
    </location>
</feature>
<feature type="strand" evidence="5">
    <location>
        <begin position="72"/>
        <end position="78"/>
    </location>
</feature>
<feature type="turn" evidence="5">
    <location>
        <begin position="79"/>
        <end position="81"/>
    </location>
</feature>
<feature type="strand" evidence="5">
    <location>
        <begin position="82"/>
        <end position="88"/>
    </location>
</feature>
<feature type="turn" evidence="5">
    <location>
        <begin position="90"/>
        <end position="92"/>
    </location>
</feature>
<feature type="strand" evidence="5">
    <location>
        <begin position="95"/>
        <end position="98"/>
    </location>
</feature>
<feature type="helix" evidence="5">
    <location>
        <begin position="103"/>
        <end position="113"/>
    </location>
</feature>
<feature type="strand" evidence="5">
    <location>
        <begin position="119"/>
        <end position="121"/>
    </location>
</feature>
<feature type="helix" evidence="5">
    <location>
        <begin position="127"/>
        <end position="130"/>
    </location>
</feature>
<feature type="helix" evidence="5">
    <location>
        <begin position="133"/>
        <end position="140"/>
    </location>
</feature>
<feature type="strand" evidence="5">
    <location>
        <begin position="143"/>
        <end position="147"/>
    </location>
</feature>
<feature type="helix" evidence="5">
    <location>
        <begin position="148"/>
        <end position="153"/>
    </location>
</feature>
<feature type="strand" evidence="5">
    <location>
        <begin position="157"/>
        <end position="161"/>
    </location>
</feature>
<feature type="strand" evidence="5">
    <location>
        <begin position="166"/>
        <end position="169"/>
    </location>
</feature>
<feature type="strand" evidence="5">
    <location>
        <begin position="172"/>
        <end position="178"/>
    </location>
</feature>
<feature type="strand" evidence="5">
    <location>
        <begin position="181"/>
        <end position="185"/>
    </location>
</feature>
<feature type="strand" evidence="5">
    <location>
        <begin position="187"/>
        <end position="191"/>
    </location>
</feature>
<feature type="helix" evidence="5">
    <location>
        <begin position="192"/>
        <end position="194"/>
    </location>
</feature>
<feature type="strand" evidence="5">
    <location>
        <begin position="196"/>
        <end position="200"/>
    </location>
</feature>
<feature type="strand" evidence="5">
    <location>
        <begin position="212"/>
        <end position="214"/>
    </location>
</feature>
<feature type="helix" evidence="5">
    <location>
        <begin position="216"/>
        <end position="227"/>
    </location>
</feature>
<feature type="strand" evidence="5">
    <location>
        <begin position="234"/>
        <end position="239"/>
    </location>
</feature>
<feature type="helix" evidence="5">
    <location>
        <begin position="242"/>
        <end position="252"/>
    </location>
</feature>
<feature type="helix" evidence="5">
    <location>
        <begin position="257"/>
        <end position="271"/>
    </location>
</feature>
<feature type="helix" evidence="5">
    <location>
        <begin position="281"/>
        <end position="287"/>
    </location>
</feature>
<feature type="helix" evidence="5">
    <location>
        <begin position="289"/>
        <end position="291"/>
    </location>
</feature>
<feature type="helix" evidence="5">
    <location>
        <begin position="296"/>
        <end position="302"/>
    </location>
</feature>
<feature type="helix" evidence="5">
    <location>
        <begin position="310"/>
        <end position="322"/>
    </location>
</feature>
<name>GLO2N_ARATH</name>
<keyword id="KW-0002">3D-structure</keyword>
<keyword id="KW-0025">Alternative splicing</keyword>
<keyword id="KW-0378">Hydrolase</keyword>
<keyword id="KW-0408">Iron</keyword>
<keyword id="KW-0479">Metal-binding</keyword>
<keyword id="KW-0496">Mitochondrion</keyword>
<keyword id="KW-1185">Reference proteome</keyword>
<keyword id="KW-0809">Transit peptide</keyword>
<keyword id="KW-0862">Zinc</keyword>
<dbReference type="EC" id="3.1.2.6"/>
<dbReference type="EMBL" id="AC007169">
    <property type="protein sequence ID" value="AAD26483.1"/>
    <property type="molecule type" value="Genomic_DNA"/>
</dbReference>
<dbReference type="EMBL" id="CP002685">
    <property type="protein sequence ID" value="AEC08531.1"/>
    <property type="molecule type" value="Genomic_DNA"/>
</dbReference>
<dbReference type="EMBL" id="CP002685">
    <property type="protein sequence ID" value="AEC08532.1"/>
    <property type="molecule type" value="Genomic_DNA"/>
</dbReference>
<dbReference type="EMBL" id="AY072200">
    <property type="protein sequence ID" value="AAL60021.1"/>
    <property type="molecule type" value="mRNA"/>
</dbReference>
<dbReference type="EMBL" id="AY096672">
    <property type="protein sequence ID" value="AAM20306.1"/>
    <property type="molecule type" value="mRNA"/>
</dbReference>
<dbReference type="PIR" id="F84719">
    <property type="entry name" value="F84719"/>
</dbReference>
<dbReference type="RefSeq" id="NP_180693.1">
    <molecule id="Q9SID3-1"/>
    <property type="nucleotide sequence ID" value="NM_128692.5"/>
</dbReference>
<dbReference type="RefSeq" id="NP_850166.1">
    <molecule id="Q9SID3-2"/>
    <property type="nucleotide sequence ID" value="NM_179835.1"/>
</dbReference>
<dbReference type="PDB" id="1XM8">
    <property type="method" value="X-ray"/>
    <property type="resolution" value="1.74 A"/>
    <property type="chains" value="A/B=72-324"/>
</dbReference>
<dbReference type="PDB" id="2Q42">
    <property type="method" value="X-ray"/>
    <property type="resolution" value="1.74 A"/>
    <property type="chains" value="A/B=72-324"/>
</dbReference>
<dbReference type="PDBsum" id="1XM8"/>
<dbReference type="PDBsum" id="2Q42"/>
<dbReference type="SMR" id="Q9SID3"/>
<dbReference type="FunCoup" id="Q9SID3">
    <property type="interactions" value="482"/>
</dbReference>
<dbReference type="STRING" id="3702.Q9SID3"/>
<dbReference type="iPTMnet" id="Q9SID3"/>
<dbReference type="PaxDb" id="3702-AT2G31350.1"/>
<dbReference type="ProteomicsDB" id="247396">
    <molecule id="Q9SID3-1"/>
</dbReference>
<dbReference type="EnsemblPlants" id="AT2G31350.1">
    <molecule id="Q9SID3-1"/>
    <property type="protein sequence ID" value="AT2G31350.1"/>
    <property type="gene ID" value="AT2G31350"/>
</dbReference>
<dbReference type="EnsemblPlants" id="AT2G31350.2">
    <molecule id="Q9SID3-2"/>
    <property type="protein sequence ID" value="AT2G31350.2"/>
    <property type="gene ID" value="AT2G31350"/>
</dbReference>
<dbReference type="GeneID" id="817693"/>
<dbReference type="Gramene" id="AT2G31350.1">
    <molecule id="Q9SID3-1"/>
    <property type="protein sequence ID" value="AT2G31350.1"/>
    <property type="gene ID" value="AT2G31350"/>
</dbReference>
<dbReference type="Gramene" id="AT2G31350.2">
    <molecule id="Q9SID3-2"/>
    <property type="protein sequence ID" value="AT2G31350.2"/>
    <property type="gene ID" value="AT2G31350"/>
</dbReference>
<dbReference type="KEGG" id="ath:AT2G31350"/>
<dbReference type="Araport" id="AT2G31350"/>
<dbReference type="TAIR" id="AT2G31350">
    <property type="gene designation" value="GLX2-5"/>
</dbReference>
<dbReference type="eggNOG" id="KOG0813">
    <property type="taxonomic scope" value="Eukaryota"/>
</dbReference>
<dbReference type="InParanoid" id="Q9SID3"/>
<dbReference type="OrthoDB" id="515692at2759"/>
<dbReference type="PhylomeDB" id="Q9SID3"/>
<dbReference type="BRENDA" id="3.1.2.6">
    <property type="organism ID" value="399"/>
</dbReference>
<dbReference type="UniPathway" id="UPA00619">
    <property type="reaction ID" value="UER00676"/>
</dbReference>
<dbReference type="EvolutionaryTrace" id="Q9SID3"/>
<dbReference type="PRO" id="PR:Q9SID3"/>
<dbReference type="Proteomes" id="UP000006548">
    <property type="component" value="Chromosome 2"/>
</dbReference>
<dbReference type="ExpressionAtlas" id="Q9SID3">
    <property type="expression patterns" value="baseline and differential"/>
</dbReference>
<dbReference type="GO" id="GO:0005739">
    <property type="term" value="C:mitochondrion"/>
    <property type="evidence" value="ECO:0000303"/>
    <property type="project" value="TAIR"/>
</dbReference>
<dbReference type="GO" id="GO:0004416">
    <property type="term" value="F:hydroxyacylglutathione hydrolase activity"/>
    <property type="evidence" value="ECO:0000314"/>
    <property type="project" value="TAIR"/>
</dbReference>
<dbReference type="GO" id="GO:0005506">
    <property type="term" value="F:iron ion binding"/>
    <property type="evidence" value="ECO:0000314"/>
    <property type="project" value="TAIR"/>
</dbReference>
<dbReference type="GO" id="GO:0008270">
    <property type="term" value="F:zinc ion binding"/>
    <property type="evidence" value="ECO:0000314"/>
    <property type="project" value="TAIR"/>
</dbReference>
<dbReference type="GO" id="GO:0019243">
    <property type="term" value="P:methylglyoxal catabolic process to D-lactate via S-lactoyl-glutathione"/>
    <property type="evidence" value="ECO:0007669"/>
    <property type="project" value="InterPro"/>
</dbReference>
<dbReference type="CDD" id="cd07723">
    <property type="entry name" value="hydroxyacylglutathione_hydrolase_MBL-fold"/>
    <property type="match status" value="1"/>
</dbReference>
<dbReference type="FunFam" id="3.60.15.10:FF:000019">
    <property type="entry name" value="Hydroxyacylglutathione hydrolase, mitochondrial"/>
    <property type="match status" value="1"/>
</dbReference>
<dbReference type="Gene3D" id="3.60.15.10">
    <property type="entry name" value="Ribonuclease Z/Hydroxyacylglutathione hydrolase-like"/>
    <property type="match status" value="1"/>
</dbReference>
<dbReference type="HAMAP" id="MF_01374">
    <property type="entry name" value="Glyoxalase_2"/>
    <property type="match status" value="1"/>
</dbReference>
<dbReference type="InterPro" id="IPR035680">
    <property type="entry name" value="Clx_II_MBL"/>
</dbReference>
<dbReference type="InterPro" id="IPR050110">
    <property type="entry name" value="Glyoxalase_II_hydrolase"/>
</dbReference>
<dbReference type="InterPro" id="IPR032282">
    <property type="entry name" value="HAGH_C"/>
</dbReference>
<dbReference type="InterPro" id="IPR017782">
    <property type="entry name" value="Hydroxyacylglutathione_Hdrlase"/>
</dbReference>
<dbReference type="InterPro" id="IPR001279">
    <property type="entry name" value="Metallo-B-lactamas"/>
</dbReference>
<dbReference type="InterPro" id="IPR036866">
    <property type="entry name" value="RibonucZ/Hydroxyglut_hydro"/>
</dbReference>
<dbReference type="NCBIfam" id="TIGR03413">
    <property type="entry name" value="GSH_gloB"/>
    <property type="match status" value="1"/>
</dbReference>
<dbReference type="PANTHER" id="PTHR43705">
    <property type="entry name" value="HYDROXYACYLGLUTATHIONE HYDROLASE"/>
    <property type="match status" value="1"/>
</dbReference>
<dbReference type="PANTHER" id="PTHR43705:SF1">
    <property type="entry name" value="HYDROXYACYLGLUTATHIONE HYDROLASE GLOB"/>
    <property type="match status" value="1"/>
</dbReference>
<dbReference type="Pfam" id="PF16123">
    <property type="entry name" value="HAGH_C"/>
    <property type="match status" value="1"/>
</dbReference>
<dbReference type="Pfam" id="PF00753">
    <property type="entry name" value="Lactamase_B"/>
    <property type="match status" value="1"/>
</dbReference>
<dbReference type="SMART" id="SM00849">
    <property type="entry name" value="Lactamase_B"/>
    <property type="match status" value="1"/>
</dbReference>
<dbReference type="SUPFAM" id="SSF56281">
    <property type="entry name" value="Metallo-hydrolase/oxidoreductase"/>
    <property type="match status" value="1"/>
</dbReference>
<comment type="function">
    <text evidence="2">Thiolesterase that catalyzes the hydrolysis of S-D-lactoyl-glutathione to form glutathione and D-lactic acid.</text>
</comment>
<comment type="catalytic activity">
    <reaction evidence="2">
        <text>an S-(2-hydroxyacyl)glutathione + H2O = a 2-hydroxy carboxylate + glutathione + H(+)</text>
        <dbReference type="Rhea" id="RHEA:21864"/>
        <dbReference type="ChEBI" id="CHEBI:15377"/>
        <dbReference type="ChEBI" id="CHEBI:15378"/>
        <dbReference type="ChEBI" id="CHEBI:57925"/>
        <dbReference type="ChEBI" id="CHEBI:58896"/>
        <dbReference type="ChEBI" id="CHEBI:71261"/>
        <dbReference type="EC" id="3.1.2.6"/>
    </reaction>
</comment>
<comment type="cofactor">
    <cofactor evidence="2">
        <name>Fe(3+)</name>
        <dbReference type="ChEBI" id="CHEBI:29034"/>
    </cofactor>
    <text evidence="2">Binds 1 Fe(3+) ion per subunit. Electron spin resonance clearly indicates the presence of Fe(3+) (PubMed:16227621).</text>
</comment>
<comment type="cofactor">
    <cofactor evidence="2">
        <name>Fe(2+)</name>
        <dbReference type="ChEBI" id="CHEBI:29033"/>
    </cofactor>
    <cofactor evidence="2">
        <name>Zn(2+)</name>
        <dbReference type="ChEBI" id="CHEBI:29105"/>
    </cofactor>
    <text evidence="2">Binds 1 Fe(2+) or Zn(2+) ion per subunit. Electron spin resonance indicates the presence of either Fe(2+) or Zn(2+), while X-ray crystallography shows the presence of Zn(2+). Mn(2+) is not a cofactor (PubMed:16227621).</text>
</comment>
<comment type="pathway">
    <text>Secondary metabolite metabolism; methylglyoxal degradation; (R)-lactate from methylglyoxal: step 2/2.</text>
</comment>
<comment type="subunit">
    <text evidence="2 3">Monomer.</text>
</comment>
<comment type="subcellular location">
    <subcellularLocation>
        <location evidence="4">Mitochondrion</location>
    </subcellularLocation>
</comment>
<comment type="alternative products">
    <event type="alternative splicing"/>
    <isoform>
        <id>Q9SID3-1</id>
        <name>1</name>
        <sequence type="displayed"/>
    </isoform>
    <isoform>
        <id>Q9SID3-2</id>
        <name>2</name>
        <sequence type="described" ref="VSP_018092"/>
    </isoform>
</comment>
<comment type="miscellaneous">
    <molecule>Isoform 2</molecule>
    <text evidence="4">May be due to a competing acceptor splice site.</text>
</comment>
<comment type="similarity">
    <text evidence="4">Belongs to the metallo-beta-lactamase superfamily. Glyoxalase II family.</text>
</comment>
<organism>
    <name type="scientific">Arabidopsis thaliana</name>
    <name type="common">Mouse-ear cress</name>
    <dbReference type="NCBI Taxonomy" id="3702"/>
    <lineage>
        <taxon>Eukaryota</taxon>
        <taxon>Viridiplantae</taxon>
        <taxon>Streptophyta</taxon>
        <taxon>Embryophyta</taxon>
        <taxon>Tracheophyta</taxon>
        <taxon>Spermatophyta</taxon>
        <taxon>Magnoliopsida</taxon>
        <taxon>eudicotyledons</taxon>
        <taxon>Gunneridae</taxon>
        <taxon>Pentapetalae</taxon>
        <taxon>rosids</taxon>
        <taxon>malvids</taxon>
        <taxon>Brassicales</taxon>
        <taxon>Brassicaceae</taxon>
        <taxon>Camelineae</taxon>
        <taxon>Arabidopsis</taxon>
    </lineage>
</organism>
<protein>
    <recommendedName>
        <fullName>Hydroxyacylglutathione hydrolase 2, mitochondrial</fullName>
        <ecNumber>3.1.2.6</ecNumber>
    </recommendedName>
    <alternativeName>
        <fullName>Glyoxalase II</fullName>
        <shortName>Glx II</shortName>
    </alternativeName>
</protein>
<sequence length="324" mass="35841">MQTISKASSATSFFRCSRKLSSQPCVRQLNIRKSLVCRVMKLVSSPLRTLRGAGKSIRVSKFCSVSNVSSLQIELVPCLKDNYAYILHDEDTGTVGVVDPSEAEPIIDSLKRSGRNLTYILNTHHHYDHTGGNLELKDRYGAKVIGSAMDKDRIPGIDMALKDGDKWMFAGHEVHVMDTPGHTKGHISLYFPGSRAIFTGDTMFSLSCGKLFEGTPKQMLASLQKITSLPDDTSIYCGHEYTLSNSKFALSLEPNNEVLQSYAAHVAELRSKKLPTIPTTVKMEKACNPFLRSSNTDIRRALRIPEAADEAEALGIIRKAKDDF</sequence>
<accession>Q9SID3</accession>
<accession>Q3EBQ9</accession>
<proteinExistence type="evidence at protein level"/>